<accession>B3H4X8</accession>
<reference key="1">
    <citation type="journal article" date="2009" name="Curr. Biol.">
        <title>A single amino acid replacement in ETC2 shapes trichome patterning in natural Arabidopsis populations.</title>
        <authorList>
            <person name="Hilscher J."/>
            <person name="Schlotterer C."/>
            <person name="Hauser M.T."/>
        </authorList>
    </citation>
    <scope>NUCLEOTIDE SEQUENCE [GENOMIC DNA]</scope>
    <source>
        <strain>cv. Columbia</strain>
        <strain>cv. Gr-1</strain>
        <strain>cv. Landsberg erecta</strain>
        <strain>cv. Oy-0</strain>
    </source>
</reference>
<reference key="2">
    <citation type="journal article" date="1999" name="Nature">
        <title>Sequence and analysis of chromosome 2 of the plant Arabidopsis thaliana.</title>
        <authorList>
            <person name="Lin X."/>
            <person name="Kaul S."/>
            <person name="Rounsley S.D."/>
            <person name="Shea T.P."/>
            <person name="Benito M.-I."/>
            <person name="Town C.D."/>
            <person name="Fujii C.Y."/>
            <person name="Mason T.M."/>
            <person name="Bowman C.L."/>
            <person name="Barnstead M.E."/>
            <person name="Feldblyum T.V."/>
            <person name="Buell C.R."/>
            <person name="Ketchum K.A."/>
            <person name="Lee J.J."/>
            <person name="Ronning C.M."/>
            <person name="Koo H.L."/>
            <person name="Moffat K.S."/>
            <person name="Cronin L.A."/>
            <person name="Shen M."/>
            <person name="Pai G."/>
            <person name="Van Aken S."/>
            <person name="Umayam L."/>
            <person name="Tallon L.J."/>
            <person name="Gill J.E."/>
            <person name="Adams M.D."/>
            <person name="Carrera A.J."/>
            <person name="Creasy T.H."/>
            <person name="Goodman H.M."/>
            <person name="Somerville C.R."/>
            <person name="Copenhaver G.P."/>
            <person name="Preuss D."/>
            <person name="Nierman W.C."/>
            <person name="White O."/>
            <person name="Eisen J.A."/>
            <person name="Salzberg S.L."/>
            <person name="Fraser C.M."/>
            <person name="Venter J.C."/>
        </authorList>
    </citation>
    <scope>NUCLEOTIDE SEQUENCE [LARGE SCALE GENOMIC DNA]</scope>
    <source>
        <strain>cv. Columbia</strain>
    </source>
</reference>
<reference key="3">
    <citation type="journal article" date="2017" name="Plant J.">
        <title>Araport11: a complete reannotation of the Arabidopsis thaliana reference genome.</title>
        <authorList>
            <person name="Cheng C.Y."/>
            <person name="Krishnakumar V."/>
            <person name="Chan A.P."/>
            <person name="Thibaud-Nissen F."/>
            <person name="Schobel S."/>
            <person name="Town C.D."/>
        </authorList>
    </citation>
    <scope>GENOME REANNOTATION</scope>
    <source>
        <strain>cv. Columbia</strain>
    </source>
</reference>
<reference key="4">
    <citation type="journal article" date="2011" name="BMC Plant Biol.">
        <title>Functional characterization of TRICHOMELESS2, a new single-repeat R3 MYB transcription factor in the regulation of trichome patterning in Arabidopsis.</title>
        <authorList>
            <person name="Gan L."/>
            <person name="Xia K."/>
            <person name="Chen J.G."/>
            <person name="Wang S."/>
        </authorList>
    </citation>
    <scope>FUNCTION</scope>
    <scope>INTERACTION WITH GL3</scope>
    <scope>SUBCELLULAR LOCATION</scope>
    <scope>TISSUE SPECIFICITY</scope>
</reference>
<reference key="5">
    <citation type="journal article" date="2012" name="Int. J. Mol. Sci.">
        <title>Expression Analysis of an R3-Type MYB Transcription Factor CPC-LIKE MYB4 (TRICHOMELESS2) and CPL4-Related Transcripts in Arabidopsis.</title>
        <authorList>
            <person name="Tominaga-Wada R."/>
            <person name="Nukumizu Y."/>
        </authorList>
    </citation>
    <scope>TISSUE SPECIFICITY</scope>
</reference>
<sequence>MDNTNRLRHLRSRKQSKFTLGDTAEVNSVKWEFINMTEQEEDLIFRMHRLVGDRWDLIAGRVVGREAKDIERYWIMRNCDHCSHKRRRVHKFYRFSISPP</sequence>
<dbReference type="EMBL" id="FJ972677">
    <property type="protein sequence ID" value="ADC36207.1"/>
    <property type="molecule type" value="Genomic_DNA"/>
</dbReference>
<dbReference type="EMBL" id="FJ972679">
    <property type="protein sequence ID" value="ADC36209.1"/>
    <property type="molecule type" value="Genomic_DNA"/>
</dbReference>
<dbReference type="EMBL" id="FJ972680">
    <property type="protein sequence ID" value="ADC36210.1"/>
    <property type="molecule type" value="Genomic_DNA"/>
</dbReference>
<dbReference type="EMBL" id="FJ972681">
    <property type="protein sequence ID" value="ADC36211.1"/>
    <property type="molecule type" value="Genomic_DNA"/>
</dbReference>
<dbReference type="EMBL" id="U93215">
    <property type="status" value="NOT_ANNOTATED_CDS"/>
    <property type="molecule type" value="Genomic_DNA"/>
</dbReference>
<dbReference type="EMBL" id="CP002685">
    <property type="protein sequence ID" value="AEC08386.1"/>
    <property type="molecule type" value="Genomic_DNA"/>
</dbReference>
<dbReference type="RefSeq" id="NP_001118417.1">
    <property type="nucleotide sequence ID" value="NM_001124945.2"/>
</dbReference>
<dbReference type="SMR" id="B3H4X8"/>
<dbReference type="BioGRID" id="926895">
    <property type="interactions" value="7"/>
</dbReference>
<dbReference type="FunCoup" id="B3H4X8">
    <property type="interactions" value="47"/>
</dbReference>
<dbReference type="IntAct" id="B3H4X8">
    <property type="interactions" value="6"/>
</dbReference>
<dbReference type="STRING" id="3702.B3H4X8"/>
<dbReference type="PaxDb" id="3702-AT2G30424.1"/>
<dbReference type="EnsemblPlants" id="AT2G30424.1">
    <property type="protein sequence ID" value="AT2G30424.1"/>
    <property type="gene ID" value="AT2G30424"/>
</dbReference>
<dbReference type="GeneID" id="6240858"/>
<dbReference type="Gramene" id="AT2G30424.1">
    <property type="protein sequence ID" value="AT2G30424.1"/>
    <property type="gene ID" value="AT2G30424"/>
</dbReference>
<dbReference type="KEGG" id="ath:AT2G30424"/>
<dbReference type="Araport" id="AT2G30424"/>
<dbReference type="TAIR" id="AT2G30424">
    <property type="gene designation" value="TCL2"/>
</dbReference>
<dbReference type="HOGENOM" id="CLU_178021_1_0_1"/>
<dbReference type="InParanoid" id="B3H4X8"/>
<dbReference type="OMA" id="KDIERYW"/>
<dbReference type="OrthoDB" id="1077569at2759"/>
<dbReference type="PhylomeDB" id="B3H4X8"/>
<dbReference type="PRO" id="PR:B3H4X8"/>
<dbReference type="Proteomes" id="UP000006548">
    <property type="component" value="Chromosome 2"/>
</dbReference>
<dbReference type="ExpressionAtlas" id="B3H4X8">
    <property type="expression patterns" value="baseline and differential"/>
</dbReference>
<dbReference type="GO" id="GO:0005634">
    <property type="term" value="C:nucleus"/>
    <property type="evidence" value="ECO:0000314"/>
    <property type="project" value="TAIR"/>
</dbReference>
<dbReference type="GO" id="GO:0003677">
    <property type="term" value="F:DNA binding"/>
    <property type="evidence" value="ECO:0007669"/>
    <property type="project" value="UniProtKB-KW"/>
</dbReference>
<dbReference type="GO" id="GO:0045892">
    <property type="term" value="P:negative regulation of DNA-templated transcription"/>
    <property type="evidence" value="ECO:0000315"/>
    <property type="project" value="TAIR"/>
</dbReference>
<dbReference type="GO" id="GO:1900033">
    <property type="term" value="P:negative regulation of trichome patterning"/>
    <property type="evidence" value="ECO:0000315"/>
    <property type="project" value="TAIR"/>
</dbReference>
<dbReference type="GO" id="GO:0048629">
    <property type="term" value="P:trichome patterning"/>
    <property type="evidence" value="ECO:0000315"/>
    <property type="project" value="TAIR"/>
</dbReference>
<dbReference type="CDD" id="cd00167">
    <property type="entry name" value="SANT"/>
    <property type="match status" value="1"/>
</dbReference>
<dbReference type="FunFam" id="1.10.10.60:FF:000411">
    <property type="entry name" value="Transcription factor TRY"/>
    <property type="match status" value="1"/>
</dbReference>
<dbReference type="Gene3D" id="1.10.10.60">
    <property type="entry name" value="Homeodomain-like"/>
    <property type="match status" value="1"/>
</dbReference>
<dbReference type="InterPro" id="IPR009057">
    <property type="entry name" value="Homeodomain-like_sf"/>
</dbReference>
<dbReference type="InterPro" id="IPR015495">
    <property type="entry name" value="Myb_TF_plants"/>
</dbReference>
<dbReference type="InterPro" id="IPR001005">
    <property type="entry name" value="SANT/Myb"/>
</dbReference>
<dbReference type="PANTHER" id="PTHR47998:SF51">
    <property type="entry name" value="MYB-LIKE TRANSCRIPTION FACTOR ETC2-RELATED"/>
    <property type="match status" value="1"/>
</dbReference>
<dbReference type="PANTHER" id="PTHR47998">
    <property type="entry name" value="TRANSCRIPTION FACTOR MYB51-LIKE ISOFORM X1"/>
    <property type="match status" value="1"/>
</dbReference>
<dbReference type="Pfam" id="PF00249">
    <property type="entry name" value="Myb_DNA-binding"/>
    <property type="match status" value="1"/>
</dbReference>
<dbReference type="SMART" id="SM00717">
    <property type="entry name" value="SANT"/>
    <property type="match status" value="1"/>
</dbReference>
<dbReference type="SUPFAM" id="SSF46689">
    <property type="entry name" value="Homeodomain-like"/>
    <property type="match status" value="1"/>
</dbReference>
<comment type="function">
    <text evidence="1">MYB-type transcription factor involved in trichome cell specification. Acts as a negative regulator of trichome patterning and formation. May function by suppressing the expression of GL3.</text>
</comment>
<comment type="subunit">
    <text evidence="1">Interacts with GL3.</text>
</comment>
<comment type="subcellular location">
    <subcellularLocation>
        <location evidence="1">Nucleus</location>
    </subcellularLocation>
</comment>
<comment type="tissue specificity">
    <text evidence="1 2">Expressed in cotyledons, petioles, rosette leaves, hydathodes, cauline leaves, stems, pedicels and flower buds.</text>
</comment>
<comment type="miscellaneous">
    <text evidence="3">Plants over-expressing TCL2 does not have any trichomes on rosette leaves, inflorescence stems, cauline leaves or floral organs.</text>
</comment>
<proteinExistence type="evidence at protein level"/>
<protein>
    <recommendedName>
        <fullName>MYB-like transcription factor TCL2</fullName>
    </recommendedName>
    <alternativeName>
        <fullName>Protein CAPRICE-like MYB4</fullName>
    </alternativeName>
    <alternativeName>
        <fullName>Protein TRICHOMELESS 2</fullName>
    </alternativeName>
</protein>
<name>TCL2_ARATH</name>
<gene>
    <name type="primary">TCL2</name>
    <name type="synonym">CPL4</name>
    <name type="ordered locus">At2g30424</name>
    <name type="ORF">T6B20</name>
</gene>
<evidence type="ECO:0000269" key="1">
    <source>
    </source>
</evidence>
<evidence type="ECO:0000269" key="2">
    <source>
    </source>
</evidence>
<evidence type="ECO:0000305" key="3">
    <source>
    </source>
</evidence>
<organism>
    <name type="scientific">Arabidopsis thaliana</name>
    <name type="common">Mouse-ear cress</name>
    <dbReference type="NCBI Taxonomy" id="3702"/>
    <lineage>
        <taxon>Eukaryota</taxon>
        <taxon>Viridiplantae</taxon>
        <taxon>Streptophyta</taxon>
        <taxon>Embryophyta</taxon>
        <taxon>Tracheophyta</taxon>
        <taxon>Spermatophyta</taxon>
        <taxon>Magnoliopsida</taxon>
        <taxon>eudicotyledons</taxon>
        <taxon>Gunneridae</taxon>
        <taxon>Pentapetalae</taxon>
        <taxon>rosids</taxon>
        <taxon>malvids</taxon>
        <taxon>Brassicales</taxon>
        <taxon>Brassicaceae</taxon>
        <taxon>Camelineae</taxon>
        <taxon>Arabidopsis</taxon>
    </lineage>
</organism>
<keyword id="KW-0217">Developmental protein</keyword>
<keyword id="KW-0238">DNA-binding</keyword>
<keyword id="KW-0539">Nucleus</keyword>
<keyword id="KW-1185">Reference proteome</keyword>
<keyword id="KW-0678">Repressor</keyword>
<keyword id="KW-0804">Transcription</keyword>
<keyword id="KW-0805">Transcription regulation</keyword>
<feature type="chain" id="PRO_0000423051" description="MYB-like transcription factor TCL2">
    <location>
        <begin position="1"/>
        <end position="100"/>
    </location>
</feature>
<feature type="domain" description="Myb-like">
    <location>
        <begin position="37"/>
        <end position="74"/>
    </location>
</feature>